<evidence type="ECO:0000255" key="1">
    <source>
        <dbReference type="HAMAP-Rule" id="MF_00318"/>
    </source>
</evidence>
<gene>
    <name evidence="1" type="primary">eno</name>
    <name type="ordered locus">Sputcn32_2757</name>
</gene>
<protein>
    <recommendedName>
        <fullName evidence="1">Enolase</fullName>
        <ecNumber evidence="1">4.2.1.11</ecNumber>
    </recommendedName>
    <alternativeName>
        <fullName evidence="1">2-phospho-D-glycerate hydro-lyase</fullName>
    </alternativeName>
    <alternativeName>
        <fullName evidence="1">2-phosphoglycerate dehydratase</fullName>
    </alternativeName>
</protein>
<keyword id="KW-0963">Cytoplasm</keyword>
<keyword id="KW-0324">Glycolysis</keyword>
<keyword id="KW-0456">Lyase</keyword>
<keyword id="KW-0460">Magnesium</keyword>
<keyword id="KW-0479">Metal-binding</keyword>
<keyword id="KW-0964">Secreted</keyword>
<organism>
    <name type="scientific">Shewanella putrefaciens (strain CN-32 / ATCC BAA-453)</name>
    <dbReference type="NCBI Taxonomy" id="319224"/>
    <lineage>
        <taxon>Bacteria</taxon>
        <taxon>Pseudomonadati</taxon>
        <taxon>Pseudomonadota</taxon>
        <taxon>Gammaproteobacteria</taxon>
        <taxon>Alteromonadales</taxon>
        <taxon>Shewanellaceae</taxon>
        <taxon>Shewanella</taxon>
    </lineage>
</organism>
<dbReference type="EC" id="4.2.1.11" evidence="1"/>
<dbReference type="EMBL" id="CP000681">
    <property type="protein sequence ID" value="ABP76476.1"/>
    <property type="molecule type" value="Genomic_DNA"/>
</dbReference>
<dbReference type="SMR" id="A4Y943"/>
<dbReference type="STRING" id="319224.Sputcn32_2757"/>
<dbReference type="KEGG" id="spc:Sputcn32_2757"/>
<dbReference type="eggNOG" id="COG0148">
    <property type="taxonomic scope" value="Bacteria"/>
</dbReference>
<dbReference type="HOGENOM" id="CLU_031223_2_1_6"/>
<dbReference type="UniPathway" id="UPA00109">
    <property type="reaction ID" value="UER00187"/>
</dbReference>
<dbReference type="GO" id="GO:0009986">
    <property type="term" value="C:cell surface"/>
    <property type="evidence" value="ECO:0007669"/>
    <property type="project" value="UniProtKB-SubCell"/>
</dbReference>
<dbReference type="GO" id="GO:0005576">
    <property type="term" value="C:extracellular region"/>
    <property type="evidence" value="ECO:0007669"/>
    <property type="project" value="UniProtKB-SubCell"/>
</dbReference>
<dbReference type="GO" id="GO:0000015">
    <property type="term" value="C:phosphopyruvate hydratase complex"/>
    <property type="evidence" value="ECO:0007669"/>
    <property type="project" value="InterPro"/>
</dbReference>
<dbReference type="GO" id="GO:0000287">
    <property type="term" value="F:magnesium ion binding"/>
    <property type="evidence" value="ECO:0007669"/>
    <property type="project" value="UniProtKB-UniRule"/>
</dbReference>
<dbReference type="GO" id="GO:0004634">
    <property type="term" value="F:phosphopyruvate hydratase activity"/>
    <property type="evidence" value="ECO:0007669"/>
    <property type="project" value="UniProtKB-UniRule"/>
</dbReference>
<dbReference type="GO" id="GO:0006096">
    <property type="term" value="P:glycolytic process"/>
    <property type="evidence" value="ECO:0007669"/>
    <property type="project" value="UniProtKB-UniRule"/>
</dbReference>
<dbReference type="CDD" id="cd03313">
    <property type="entry name" value="enolase"/>
    <property type="match status" value="1"/>
</dbReference>
<dbReference type="FunFam" id="3.20.20.120:FF:000001">
    <property type="entry name" value="Enolase"/>
    <property type="match status" value="1"/>
</dbReference>
<dbReference type="FunFam" id="3.30.390.10:FF:000001">
    <property type="entry name" value="Enolase"/>
    <property type="match status" value="1"/>
</dbReference>
<dbReference type="Gene3D" id="3.20.20.120">
    <property type="entry name" value="Enolase-like C-terminal domain"/>
    <property type="match status" value="1"/>
</dbReference>
<dbReference type="Gene3D" id="3.30.390.10">
    <property type="entry name" value="Enolase-like, N-terminal domain"/>
    <property type="match status" value="1"/>
</dbReference>
<dbReference type="HAMAP" id="MF_00318">
    <property type="entry name" value="Enolase"/>
    <property type="match status" value="1"/>
</dbReference>
<dbReference type="InterPro" id="IPR000941">
    <property type="entry name" value="Enolase"/>
</dbReference>
<dbReference type="InterPro" id="IPR036849">
    <property type="entry name" value="Enolase-like_C_sf"/>
</dbReference>
<dbReference type="InterPro" id="IPR029017">
    <property type="entry name" value="Enolase-like_N"/>
</dbReference>
<dbReference type="InterPro" id="IPR020810">
    <property type="entry name" value="Enolase_C"/>
</dbReference>
<dbReference type="InterPro" id="IPR020809">
    <property type="entry name" value="Enolase_CS"/>
</dbReference>
<dbReference type="InterPro" id="IPR020811">
    <property type="entry name" value="Enolase_N"/>
</dbReference>
<dbReference type="NCBIfam" id="TIGR01060">
    <property type="entry name" value="eno"/>
    <property type="match status" value="1"/>
</dbReference>
<dbReference type="PANTHER" id="PTHR11902">
    <property type="entry name" value="ENOLASE"/>
    <property type="match status" value="1"/>
</dbReference>
<dbReference type="PANTHER" id="PTHR11902:SF1">
    <property type="entry name" value="ENOLASE"/>
    <property type="match status" value="1"/>
</dbReference>
<dbReference type="Pfam" id="PF00113">
    <property type="entry name" value="Enolase_C"/>
    <property type="match status" value="1"/>
</dbReference>
<dbReference type="Pfam" id="PF03952">
    <property type="entry name" value="Enolase_N"/>
    <property type="match status" value="1"/>
</dbReference>
<dbReference type="PIRSF" id="PIRSF001400">
    <property type="entry name" value="Enolase"/>
    <property type="match status" value="1"/>
</dbReference>
<dbReference type="PRINTS" id="PR00148">
    <property type="entry name" value="ENOLASE"/>
</dbReference>
<dbReference type="SFLD" id="SFLDS00001">
    <property type="entry name" value="Enolase"/>
    <property type="match status" value="1"/>
</dbReference>
<dbReference type="SFLD" id="SFLDF00002">
    <property type="entry name" value="enolase"/>
    <property type="match status" value="1"/>
</dbReference>
<dbReference type="SMART" id="SM01192">
    <property type="entry name" value="Enolase_C"/>
    <property type="match status" value="1"/>
</dbReference>
<dbReference type="SMART" id="SM01193">
    <property type="entry name" value="Enolase_N"/>
    <property type="match status" value="1"/>
</dbReference>
<dbReference type="SUPFAM" id="SSF51604">
    <property type="entry name" value="Enolase C-terminal domain-like"/>
    <property type="match status" value="1"/>
</dbReference>
<dbReference type="SUPFAM" id="SSF54826">
    <property type="entry name" value="Enolase N-terminal domain-like"/>
    <property type="match status" value="1"/>
</dbReference>
<dbReference type="PROSITE" id="PS00164">
    <property type="entry name" value="ENOLASE"/>
    <property type="match status" value="1"/>
</dbReference>
<sequence>MAKIINVIGREIMDSRGNPTVEAEVHLEGGFVGMAAAPSGASTGSREALELRDGDKSRYLGKGVLTAVANVNGVIRTALLGKDATAQAELDQIMIDLDGTENKDKLGANAILAVSLAAAKAAAASKGIPLYAHIAELNGTPGQYSMPVPMMNILNGGEHADNNVDIQEFMVQPVGAKTFREALRMGAEIFHTLKKVLHDKGLSTSVGDEGGFAPNLASNADALAVIKEAVELAGYKLGTDVTLALDCAASEFYKDGKYDLAGEGKVFDSNGFSDFLKSLADQYPIVSIEDGLDESDWDGWAYQTQIMGDKIQLVGDDLFVTNTKILTRGIENGIANSILIKFNQIGSLTETLAAIRMAKEAGYTAVISHRSGETEDATIADLAVGTAAGQIKTGSLCRSDRVAKYNQLLRIEEQLGEKAPYRGLKEIKGQA</sequence>
<proteinExistence type="inferred from homology"/>
<feature type="chain" id="PRO_1000019248" description="Enolase">
    <location>
        <begin position="1"/>
        <end position="431"/>
    </location>
</feature>
<feature type="active site" description="Proton donor" evidence="1">
    <location>
        <position position="209"/>
    </location>
</feature>
<feature type="active site" description="Proton acceptor" evidence="1">
    <location>
        <position position="341"/>
    </location>
</feature>
<feature type="binding site" evidence="1">
    <location>
        <position position="167"/>
    </location>
    <ligand>
        <name>(2R)-2-phosphoglycerate</name>
        <dbReference type="ChEBI" id="CHEBI:58289"/>
    </ligand>
</feature>
<feature type="binding site" evidence="1">
    <location>
        <position position="246"/>
    </location>
    <ligand>
        <name>Mg(2+)</name>
        <dbReference type="ChEBI" id="CHEBI:18420"/>
    </ligand>
</feature>
<feature type="binding site" evidence="1">
    <location>
        <position position="289"/>
    </location>
    <ligand>
        <name>Mg(2+)</name>
        <dbReference type="ChEBI" id="CHEBI:18420"/>
    </ligand>
</feature>
<feature type="binding site" evidence="1">
    <location>
        <position position="316"/>
    </location>
    <ligand>
        <name>Mg(2+)</name>
        <dbReference type="ChEBI" id="CHEBI:18420"/>
    </ligand>
</feature>
<feature type="binding site" evidence="1">
    <location>
        <position position="341"/>
    </location>
    <ligand>
        <name>(2R)-2-phosphoglycerate</name>
        <dbReference type="ChEBI" id="CHEBI:58289"/>
    </ligand>
</feature>
<feature type="binding site" evidence="1">
    <location>
        <position position="370"/>
    </location>
    <ligand>
        <name>(2R)-2-phosphoglycerate</name>
        <dbReference type="ChEBI" id="CHEBI:58289"/>
    </ligand>
</feature>
<feature type="binding site" evidence="1">
    <location>
        <position position="371"/>
    </location>
    <ligand>
        <name>(2R)-2-phosphoglycerate</name>
        <dbReference type="ChEBI" id="CHEBI:58289"/>
    </ligand>
</feature>
<feature type="binding site" evidence="1">
    <location>
        <position position="392"/>
    </location>
    <ligand>
        <name>(2R)-2-phosphoglycerate</name>
        <dbReference type="ChEBI" id="CHEBI:58289"/>
    </ligand>
</feature>
<comment type="function">
    <text evidence="1">Catalyzes the reversible conversion of 2-phosphoglycerate (2-PG) into phosphoenolpyruvate (PEP). It is essential for the degradation of carbohydrates via glycolysis.</text>
</comment>
<comment type="catalytic activity">
    <reaction evidence="1">
        <text>(2R)-2-phosphoglycerate = phosphoenolpyruvate + H2O</text>
        <dbReference type="Rhea" id="RHEA:10164"/>
        <dbReference type="ChEBI" id="CHEBI:15377"/>
        <dbReference type="ChEBI" id="CHEBI:58289"/>
        <dbReference type="ChEBI" id="CHEBI:58702"/>
        <dbReference type="EC" id="4.2.1.11"/>
    </reaction>
</comment>
<comment type="cofactor">
    <cofactor evidence="1">
        <name>Mg(2+)</name>
        <dbReference type="ChEBI" id="CHEBI:18420"/>
    </cofactor>
    <text evidence="1">Binds a second Mg(2+) ion via substrate during catalysis.</text>
</comment>
<comment type="pathway">
    <text evidence="1">Carbohydrate degradation; glycolysis; pyruvate from D-glyceraldehyde 3-phosphate: step 4/5.</text>
</comment>
<comment type="subunit">
    <text evidence="1">Component of the RNA degradosome, a multiprotein complex involved in RNA processing and mRNA degradation.</text>
</comment>
<comment type="subcellular location">
    <subcellularLocation>
        <location evidence="1">Cytoplasm</location>
    </subcellularLocation>
    <subcellularLocation>
        <location evidence="1">Secreted</location>
    </subcellularLocation>
    <subcellularLocation>
        <location evidence="1">Cell surface</location>
    </subcellularLocation>
    <text evidence="1">Fractions of enolase are present in both the cytoplasm and on the cell surface.</text>
</comment>
<comment type="similarity">
    <text evidence="1">Belongs to the enolase family.</text>
</comment>
<reference key="1">
    <citation type="submission" date="2007-04" db="EMBL/GenBank/DDBJ databases">
        <title>Complete sequence of Shewanella putrefaciens CN-32.</title>
        <authorList>
            <consortium name="US DOE Joint Genome Institute"/>
            <person name="Copeland A."/>
            <person name="Lucas S."/>
            <person name="Lapidus A."/>
            <person name="Barry K."/>
            <person name="Detter J.C."/>
            <person name="Glavina del Rio T."/>
            <person name="Hammon N."/>
            <person name="Israni S."/>
            <person name="Dalin E."/>
            <person name="Tice H."/>
            <person name="Pitluck S."/>
            <person name="Chain P."/>
            <person name="Malfatti S."/>
            <person name="Shin M."/>
            <person name="Vergez L."/>
            <person name="Schmutz J."/>
            <person name="Larimer F."/>
            <person name="Land M."/>
            <person name="Hauser L."/>
            <person name="Kyrpides N."/>
            <person name="Mikhailova N."/>
            <person name="Romine M.F."/>
            <person name="Fredrickson J."/>
            <person name="Tiedje J."/>
            <person name="Richardson P."/>
        </authorList>
    </citation>
    <scope>NUCLEOTIDE SEQUENCE [LARGE SCALE GENOMIC DNA]</scope>
    <source>
        <strain>CN-32 / ATCC BAA-453</strain>
    </source>
</reference>
<accession>A4Y943</accession>
<name>ENO_SHEPC</name>